<sequence length="196" mass="22955">MKIFAVLSAFLMPFVVPNTTVNGYKDLRFGMTIEQAKETKLCEDQWHLPADDDWRRVVRGYWVCDKFRFDDGYAVARLRFIGGQLKSIELKMPEYPKYPAELLLHVLEEKYGKTIEVEQRDLIEEDILQGKIRKRRKNESALLDTYQFAKGTVSLTLLTYNGIPQPAEIIYSAPELLLLEKKLEDRPQRRTLLRDL</sequence>
<gene>
    <name type="ordered locus">PM0314</name>
</gene>
<organism>
    <name type="scientific">Pasteurella multocida (strain Pm70)</name>
    <dbReference type="NCBI Taxonomy" id="272843"/>
    <lineage>
        <taxon>Bacteria</taxon>
        <taxon>Pseudomonadati</taxon>
        <taxon>Pseudomonadota</taxon>
        <taxon>Gammaproteobacteria</taxon>
        <taxon>Pasteurellales</taxon>
        <taxon>Pasteurellaceae</taxon>
        <taxon>Pasteurella</taxon>
    </lineage>
</organism>
<name>Y314_PASMU</name>
<accession>Q9CNV9</accession>
<dbReference type="EMBL" id="AE004439">
    <property type="protein sequence ID" value="AAK02398.1"/>
    <property type="molecule type" value="Genomic_DNA"/>
</dbReference>
<dbReference type="RefSeq" id="WP_005725867.1">
    <property type="nucleotide sequence ID" value="NC_002663.1"/>
</dbReference>
<dbReference type="EnsemblBacteria" id="AAK02398">
    <property type="protein sequence ID" value="AAK02398"/>
    <property type="gene ID" value="PM0314"/>
</dbReference>
<dbReference type="KEGG" id="pmu:PM0314"/>
<dbReference type="HOGENOM" id="CLU_1389066_0_0_6"/>
<dbReference type="OrthoDB" id="5686260at2"/>
<dbReference type="Proteomes" id="UP000000809">
    <property type="component" value="Chromosome"/>
</dbReference>
<reference key="1">
    <citation type="journal article" date="2001" name="Proc. Natl. Acad. Sci. U.S.A.">
        <title>Complete genomic sequence of Pasteurella multocida Pm70.</title>
        <authorList>
            <person name="May B.J."/>
            <person name="Zhang Q."/>
            <person name="Li L.L."/>
            <person name="Paustian M.L."/>
            <person name="Whittam T.S."/>
            <person name="Kapur V."/>
        </authorList>
    </citation>
    <scope>NUCLEOTIDE SEQUENCE [LARGE SCALE GENOMIC DNA]</scope>
    <source>
        <strain>Pm70</strain>
    </source>
</reference>
<proteinExistence type="predicted"/>
<feature type="chain" id="PRO_0000216292" description="Uncharacterized protein PM0314">
    <location>
        <begin position="1"/>
        <end position="196"/>
    </location>
</feature>
<keyword id="KW-1185">Reference proteome</keyword>
<protein>
    <recommendedName>
        <fullName>Uncharacterized protein PM0314</fullName>
    </recommendedName>
</protein>